<protein>
    <recommendedName>
        <fullName>Centrobin</fullName>
    </recommendedName>
    <alternativeName>
        <fullName>Centrosomal BRCA2-interacting protein</fullName>
    </alternativeName>
    <alternativeName>
        <fullName>LYST-interacting protein 8</fullName>
    </alternativeName>
</protein>
<feature type="chain" id="PRO_0000076240" description="Centrobin">
    <location>
        <begin position="1"/>
        <end position="903"/>
    </location>
</feature>
<feature type="region of interest" description="Disordered" evidence="2">
    <location>
        <begin position="1"/>
        <end position="34"/>
    </location>
</feature>
<feature type="region of interest" description="Disordered" evidence="2">
    <location>
        <begin position="110"/>
        <end position="140"/>
    </location>
</feature>
<feature type="region of interest" description="Required for centrosome localization">
    <location>
        <begin position="365"/>
        <end position="903"/>
    </location>
</feature>
<feature type="region of interest" description="Disordered" evidence="2">
    <location>
        <begin position="471"/>
        <end position="493"/>
    </location>
</feature>
<feature type="region of interest" description="Disordered" evidence="2">
    <location>
        <begin position="568"/>
        <end position="597"/>
    </location>
</feature>
<feature type="region of interest" description="Disordered" evidence="2">
    <location>
        <begin position="669"/>
        <end position="704"/>
    </location>
</feature>
<feature type="region of interest" description="Disordered" evidence="2">
    <location>
        <begin position="772"/>
        <end position="799"/>
    </location>
</feature>
<feature type="region of interest" description="Disordered" evidence="2">
    <location>
        <begin position="837"/>
        <end position="903"/>
    </location>
</feature>
<feature type="coiled-coil region" evidence="1">
    <location>
        <begin position="196"/>
        <end position="560"/>
    </location>
</feature>
<feature type="compositionally biased region" description="Polar residues" evidence="2">
    <location>
        <begin position="1"/>
        <end position="10"/>
    </location>
</feature>
<feature type="compositionally biased region" description="Pro residues" evidence="2">
    <location>
        <begin position="572"/>
        <end position="590"/>
    </location>
</feature>
<feature type="compositionally biased region" description="Basic and acidic residues" evidence="2">
    <location>
        <begin position="675"/>
        <end position="685"/>
    </location>
</feature>
<feature type="compositionally biased region" description="Low complexity" evidence="2">
    <location>
        <begin position="778"/>
        <end position="791"/>
    </location>
</feature>
<feature type="compositionally biased region" description="Basic and acidic residues" evidence="2">
    <location>
        <begin position="837"/>
        <end position="863"/>
    </location>
</feature>
<feature type="modified residue" description="Phosphoserine" evidence="11">
    <location>
        <position position="80"/>
    </location>
</feature>
<feature type="modified residue" description="Phosphoserine" evidence="11">
    <location>
        <position position="790"/>
    </location>
</feature>
<feature type="splice variant" id="VSP_016836" description="In isoform 4." evidence="9">
    <original>AREQARVCELQSGNQQLEEQRVELVERLQ</original>
    <variation>LLLDPPAPGLRSPRRRRGGSGLCLPWPWP</variation>
    <location>
        <begin position="526"/>
        <end position="554"/>
    </location>
</feature>
<feature type="splice variant" id="VSP_016837" description="In isoform 4." evidence="9">
    <location>
        <begin position="555"/>
        <end position="903"/>
    </location>
</feature>
<feature type="splice variant" id="VSP_016838" description="In isoform 2." evidence="8">
    <original>G</original>
    <variation>GYKPGRKEEGFSGWKLDYGEWSG</variation>
    <location>
        <position position="838"/>
    </location>
</feature>
<feature type="splice variant" id="VSP_016839" description="In isoform 3." evidence="7">
    <original>G</original>
    <variation>GR</variation>
    <location>
        <position position="838"/>
    </location>
</feature>
<feature type="splice variant" id="VSP_016840" description="In isoform 5." evidence="6">
    <original>TDGRGDNVPRRNTDSRLGEIPRKEIP</original>
    <variation>YKPGRKEEGFSGWKLDYGEWSGCVLH</variation>
    <location>
        <begin position="839"/>
        <end position="864"/>
    </location>
</feature>
<feature type="splice variant" id="VSP_016841" description="In isoform 5." evidence="6">
    <location>
        <begin position="865"/>
        <end position="903"/>
    </location>
</feature>
<feature type="sequence variant" id="VAR_050877" description="In dbSNP:rs35421969.">
    <original>R</original>
    <variation>Q</variation>
    <location>
        <position position="439"/>
    </location>
</feature>
<feature type="sequence variant" id="VAR_024787" description="In dbSNP:rs11650083." evidence="3 4">
    <original>P</original>
    <variation>Q</variation>
    <location>
        <position position="578"/>
    </location>
</feature>
<feature type="sequence conflict" description="In Ref. 7; AAG49447." evidence="10" ref="7">
    <original>A</original>
    <variation>D</variation>
    <location>
        <position position="582"/>
    </location>
</feature>
<reference key="1">
    <citation type="journal article" date="2005" name="J. Cell Biol.">
        <title>Centrobin: a novel daughter centriole-associated protein that is required for centriole duplication.</title>
        <authorList>
            <person name="Zou C."/>
            <person name="Li J."/>
            <person name="Bai Y."/>
            <person name="Gunning W.T."/>
            <person name="Wazer D.E."/>
            <person name="Band V."/>
            <person name="Gao Q."/>
        </authorList>
    </citation>
    <scope>NUCLEOTIDE SEQUENCE [MRNA] (ISOFORMS 1 AND 2)</scope>
    <scope>FUNCTION</scope>
    <scope>SUBCELLULAR LOCATION</scope>
    <scope>TISSUE SPECIFICITY</scope>
    <scope>DEVELOPMENTAL STAGE</scope>
</reference>
<reference key="2">
    <citation type="journal article" date="2004" name="Proc. Natl. Acad. Sci. U.S.A.">
        <title>Large-scale cDNA transfection screening for genes related to cancer development and progression.</title>
        <authorList>
            <person name="Wan D."/>
            <person name="Gong Y."/>
            <person name="Qin W."/>
            <person name="Zhang P."/>
            <person name="Li J."/>
            <person name="Wei L."/>
            <person name="Zhou X."/>
            <person name="Li H."/>
            <person name="Qiu X."/>
            <person name="Zhong F."/>
            <person name="He L."/>
            <person name="Yu J."/>
            <person name="Yao G."/>
            <person name="Jiang H."/>
            <person name="Qian L."/>
            <person name="Yu Y."/>
            <person name="Shu H."/>
            <person name="Chen X."/>
            <person name="Xu H."/>
            <person name="Guo M."/>
            <person name="Pan Z."/>
            <person name="Chen Y."/>
            <person name="Ge C."/>
            <person name="Yang S."/>
            <person name="Gu J."/>
        </authorList>
    </citation>
    <scope>NUCLEOTIDE SEQUENCE [LARGE SCALE MRNA] (ISOFORM 1)</scope>
</reference>
<reference key="3">
    <citation type="journal article" date="2007" name="BMC Genomics">
        <title>The full-ORF clone resource of the German cDNA consortium.</title>
        <authorList>
            <person name="Bechtel S."/>
            <person name="Rosenfelder H."/>
            <person name="Duda A."/>
            <person name="Schmidt C.P."/>
            <person name="Ernst U."/>
            <person name="Wellenreuther R."/>
            <person name="Mehrle A."/>
            <person name="Schuster C."/>
            <person name="Bahr A."/>
            <person name="Bloecker H."/>
            <person name="Heubner D."/>
            <person name="Hoerlein A."/>
            <person name="Michel G."/>
            <person name="Wedler H."/>
            <person name="Koehrer K."/>
            <person name="Ottenwaelder B."/>
            <person name="Poustka A."/>
            <person name="Wiemann S."/>
            <person name="Schupp I."/>
        </authorList>
    </citation>
    <scope>NUCLEOTIDE SEQUENCE [LARGE SCALE MRNA] (ISOFORM 1)</scope>
    <scope>NUCLEOTIDE SEQUENCE [LARGE SCALE MRNA] OF 147-903 (ISOFORM 4)</scope>
    <source>
        <tissue>Testis</tissue>
    </source>
</reference>
<reference key="4">
    <citation type="journal article" date="2006" name="Nature">
        <title>DNA sequence of human chromosome 17 and analysis of rearrangement in the human lineage.</title>
        <authorList>
            <person name="Zody M.C."/>
            <person name="Garber M."/>
            <person name="Adams D.J."/>
            <person name="Sharpe T."/>
            <person name="Harrow J."/>
            <person name="Lupski J.R."/>
            <person name="Nicholson C."/>
            <person name="Searle S.M."/>
            <person name="Wilming L."/>
            <person name="Young S.K."/>
            <person name="Abouelleil A."/>
            <person name="Allen N.R."/>
            <person name="Bi W."/>
            <person name="Bloom T."/>
            <person name="Borowsky M.L."/>
            <person name="Bugalter B.E."/>
            <person name="Butler J."/>
            <person name="Chang J.L."/>
            <person name="Chen C.-K."/>
            <person name="Cook A."/>
            <person name="Corum B."/>
            <person name="Cuomo C.A."/>
            <person name="de Jong P.J."/>
            <person name="DeCaprio D."/>
            <person name="Dewar K."/>
            <person name="FitzGerald M."/>
            <person name="Gilbert J."/>
            <person name="Gibson R."/>
            <person name="Gnerre S."/>
            <person name="Goldstein S."/>
            <person name="Grafham D.V."/>
            <person name="Grocock R."/>
            <person name="Hafez N."/>
            <person name="Hagopian D.S."/>
            <person name="Hart E."/>
            <person name="Norman C.H."/>
            <person name="Humphray S."/>
            <person name="Jaffe D.B."/>
            <person name="Jones M."/>
            <person name="Kamal M."/>
            <person name="Khodiyar V.K."/>
            <person name="LaButti K."/>
            <person name="Laird G."/>
            <person name="Lehoczky J."/>
            <person name="Liu X."/>
            <person name="Lokyitsang T."/>
            <person name="Loveland J."/>
            <person name="Lui A."/>
            <person name="Macdonald P."/>
            <person name="Major J.E."/>
            <person name="Matthews L."/>
            <person name="Mauceli E."/>
            <person name="McCarroll S.A."/>
            <person name="Mihalev A.H."/>
            <person name="Mudge J."/>
            <person name="Nguyen C."/>
            <person name="Nicol R."/>
            <person name="O'Leary S.B."/>
            <person name="Osoegawa K."/>
            <person name="Schwartz D.C."/>
            <person name="Shaw-Smith C."/>
            <person name="Stankiewicz P."/>
            <person name="Steward C."/>
            <person name="Swarbreck D."/>
            <person name="Venkataraman V."/>
            <person name="Whittaker C.A."/>
            <person name="Yang X."/>
            <person name="Zimmer A.R."/>
            <person name="Bradley A."/>
            <person name="Hubbard T."/>
            <person name="Birren B.W."/>
            <person name="Rogers J."/>
            <person name="Lander E.S."/>
            <person name="Nusbaum C."/>
        </authorList>
    </citation>
    <scope>NUCLEOTIDE SEQUENCE [LARGE SCALE GENOMIC DNA]</scope>
</reference>
<reference key="5">
    <citation type="journal article" date="2004" name="Genome Res.">
        <title>The status, quality, and expansion of the NIH full-length cDNA project: the Mammalian Gene Collection (MGC).</title>
        <authorList>
            <consortium name="The MGC Project Team"/>
        </authorList>
    </citation>
    <scope>NUCLEOTIDE SEQUENCE [LARGE SCALE MRNA] (ISOFORM 1)</scope>
    <scope>NUCLEOTIDE SEQUENCE [LARGE SCALE MRNA] OF 100-903 (ISOFORM 3)</scope>
    <source>
        <tissue>Brain</tissue>
        <tissue>Skin</tissue>
    </source>
</reference>
<reference key="6">
    <citation type="journal article" date="2004" name="Nat. Genet.">
        <title>Complete sequencing and characterization of 21,243 full-length human cDNAs.</title>
        <authorList>
            <person name="Ota T."/>
            <person name="Suzuki Y."/>
            <person name="Nishikawa T."/>
            <person name="Otsuki T."/>
            <person name="Sugiyama T."/>
            <person name="Irie R."/>
            <person name="Wakamatsu A."/>
            <person name="Hayashi K."/>
            <person name="Sato H."/>
            <person name="Nagai K."/>
            <person name="Kimura K."/>
            <person name="Makita H."/>
            <person name="Sekine M."/>
            <person name="Obayashi M."/>
            <person name="Nishi T."/>
            <person name="Shibahara T."/>
            <person name="Tanaka T."/>
            <person name="Ishii S."/>
            <person name="Yamamoto J."/>
            <person name="Saito K."/>
            <person name="Kawai Y."/>
            <person name="Isono Y."/>
            <person name="Nakamura Y."/>
            <person name="Nagahari K."/>
            <person name="Murakami K."/>
            <person name="Yasuda T."/>
            <person name="Iwayanagi T."/>
            <person name="Wagatsuma M."/>
            <person name="Shiratori A."/>
            <person name="Sudo H."/>
            <person name="Hosoiri T."/>
            <person name="Kaku Y."/>
            <person name="Kodaira H."/>
            <person name="Kondo H."/>
            <person name="Sugawara M."/>
            <person name="Takahashi M."/>
            <person name="Kanda K."/>
            <person name="Yokoi T."/>
            <person name="Furuya T."/>
            <person name="Kikkawa E."/>
            <person name="Omura Y."/>
            <person name="Abe K."/>
            <person name="Kamihara K."/>
            <person name="Katsuta N."/>
            <person name="Sato K."/>
            <person name="Tanikawa M."/>
            <person name="Yamazaki M."/>
            <person name="Ninomiya K."/>
            <person name="Ishibashi T."/>
            <person name="Yamashita H."/>
            <person name="Murakawa K."/>
            <person name="Fujimori K."/>
            <person name="Tanai H."/>
            <person name="Kimata M."/>
            <person name="Watanabe M."/>
            <person name="Hiraoka S."/>
            <person name="Chiba Y."/>
            <person name="Ishida S."/>
            <person name="Ono Y."/>
            <person name="Takiguchi S."/>
            <person name="Watanabe S."/>
            <person name="Yosida M."/>
            <person name="Hotuta T."/>
            <person name="Kusano J."/>
            <person name="Kanehori K."/>
            <person name="Takahashi-Fujii A."/>
            <person name="Hara H."/>
            <person name="Tanase T.-O."/>
            <person name="Nomura Y."/>
            <person name="Togiya S."/>
            <person name="Komai F."/>
            <person name="Hara R."/>
            <person name="Takeuchi K."/>
            <person name="Arita M."/>
            <person name="Imose N."/>
            <person name="Musashino K."/>
            <person name="Yuuki H."/>
            <person name="Oshima A."/>
            <person name="Sasaki N."/>
            <person name="Aotsuka S."/>
            <person name="Yoshikawa Y."/>
            <person name="Matsunawa H."/>
            <person name="Ichihara T."/>
            <person name="Shiohata N."/>
            <person name="Sano S."/>
            <person name="Moriya S."/>
            <person name="Momiyama H."/>
            <person name="Satoh N."/>
            <person name="Takami S."/>
            <person name="Terashima Y."/>
            <person name="Suzuki O."/>
            <person name="Nakagawa S."/>
            <person name="Senoh A."/>
            <person name="Mizoguchi H."/>
            <person name="Goto Y."/>
            <person name="Shimizu F."/>
            <person name="Wakebe H."/>
            <person name="Hishigaki H."/>
            <person name="Watanabe T."/>
            <person name="Sugiyama A."/>
            <person name="Takemoto M."/>
            <person name="Kawakami B."/>
            <person name="Yamazaki M."/>
            <person name="Watanabe K."/>
            <person name="Kumagai A."/>
            <person name="Itakura S."/>
            <person name="Fukuzumi Y."/>
            <person name="Fujimori Y."/>
            <person name="Komiyama M."/>
            <person name="Tashiro H."/>
            <person name="Tanigami A."/>
            <person name="Fujiwara T."/>
            <person name="Ono T."/>
            <person name="Yamada K."/>
            <person name="Fujii Y."/>
            <person name="Ozaki K."/>
            <person name="Hirao M."/>
            <person name="Ohmori Y."/>
            <person name="Kawabata A."/>
            <person name="Hikiji T."/>
            <person name="Kobatake N."/>
            <person name="Inagaki H."/>
            <person name="Ikema Y."/>
            <person name="Okamoto S."/>
            <person name="Okitani R."/>
            <person name="Kawakami T."/>
            <person name="Noguchi S."/>
            <person name="Itoh T."/>
            <person name="Shigeta K."/>
            <person name="Senba T."/>
            <person name="Matsumura K."/>
            <person name="Nakajima Y."/>
            <person name="Mizuno T."/>
            <person name="Morinaga M."/>
            <person name="Sasaki M."/>
            <person name="Togashi T."/>
            <person name="Oyama M."/>
            <person name="Hata H."/>
            <person name="Watanabe M."/>
            <person name="Komatsu T."/>
            <person name="Mizushima-Sugano J."/>
            <person name="Satoh T."/>
            <person name="Shirai Y."/>
            <person name="Takahashi Y."/>
            <person name="Nakagawa K."/>
            <person name="Okumura K."/>
            <person name="Nagase T."/>
            <person name="Nomura N."/>
            <person name="Kikuchi H."/>
            <person name="Masuho Y."/>
            <person name="Yamashita R."/>
            <person name="Nakai K."/>
            <person name="Yada T."/>
            <person name="Nakamura Y."/>
            <person name="Ohara O."/>
            <person name="Isogai T."/>
            <person name="Sugano S."/>
        </authorList>
    </citation>
    <scope>NUCLEOTIDE SEQUENCE [LARGE SCALE MRNA] OF 369-903 (ISOFORM 5)</scope>
    <scope>VARIANT GLN-578</scope>
    <source>
        <tissue>Teratocarcinoma</tissue>
    </source>
</reference>
<reference key="7">
    <citation type="journal article" date="2002" name="Mol. Med.">
        <title>The Chediak-Higashi protein interacts with SNARE complex and signal transduction proteins.</title>
        <authorList>
            <person name="Tchernev V.T."/>
            <person name="Mansfield T.A."/>
            <person name="Giot L."/>
            <person name="Kumar A.M."/>
            <person name="Nandabalan K."/>
            <person name="Li Y."/>
            <person name="Mishra V.S."/>
            <person name="Detter J.C."/>
            <person name="Rothberg J.M."/>
            <person name="Wallace M.R."/>
            <person name="Southwick F.S."/>
            <person name="Kingsmore S.F."/>
        </authorList>
    </citation>
    <scope>NUCLEOTIDE SEQUENCE [MRNA] OF 524-646</scope>
    <scope>INTERACTION WITH LYST</scope>
    <scope>VARIANT GLN-578</scope>
</reference>
<reference key="8">
    <citation type="journal article" date="2010" name="Sci. Signal.">
        <title>Quantitative phosphoproteomics reveals widespread full phosphorylation site occupancy during mitosis.</title>
        <authorList>
            <person name="Olsen J.V."/>
            <person name="Vermeulen M."/>
            <person name="Santamaria A."/>
            <person name="Kumar C."/>
            <person name="Miller M.L."/>
            <person name="Jensen L.J."/>
            <person name="Gnad F."/>
            <person name="Cox J."/>
            <person name="Jensen T.S."/>
            <person name="Nigg E.A."/>
            <person name="Brunak S."/>
            <person name="Mann M."/>
        </authorList>
    </citation>
    <scope>IDENTIFICATION BY MASS SPECTROMETRY [LARGE SCALE ANALYSIS]</scope>
    <source>
        <tissue>Cervix carcinoma</tissue>
    </source>
</reference>
<reference key="9">
    <citation type="journal article" date="2013" name="J. Proteome Res.">
        <title>Toward a comprehensive characterization of a human cancer cell phosphoproteome.</title>
        <authorList>
            <person name="Zhou H."/>
            <person name="Di Palma S."/>
            <person name="Preisinger C."/>
            <person name="Peng M."/>
            <person name="Polat A.N."/>
            <person name="Heck A.J."/>
            <person name="Mohammed S."/>
        </authorList>
    </citation>
    <scope>PHOSPHORYLATION [LARGE SCALE ANALYSIS] AT SER-80 AND SER-790</scope>
    <scope>IDENTIFICATION BY MASS SPECTROMETRY [LARGE SCALE ANALYSIS]</scope>
    <source>
        <tissue>Cervix carcinoma</tissue>
        <tissue>Erythroleukemia</tissue>
    </source>
</reference>
<name>CNTRB_HUMAN</name>
<evidence type="ECO:0000255" key="1"/>
<evidence type="ECO:0000256" key="2">
    <source>
        <dbReference type="SAM" id="MobiDB-lite"/>
    </source>
</evidence>
<evidence type="ECO:0000269" key="3">
    <source>
    </source>
</evidence>
<evidence type="ECO:0000269" key="4">
    <source>
    </source>
</evidence>
<evidence type="ECO:0000269" key="5">
    <source>
    </source>
</evidence>
<evidence type="ECO:0000303" key="6">
    <source>
    </source>
</evidence>
<evidence type="ECO:0000303" key="7">
    <source>
    </source>
</evidence>
<evidence type="ECO:0000303" key="8">
    <source>
    </source>
</evidence>
<evidence type="ECO:0000303" key="9">
    <source>
    </source>
</evidence>
<evidence type="ECO:0000305" key="10"/>
<evidence type="ECO:0007744" key="11">
    <source>
    </source>
</evidence>
<comment type="function">
    <text evidence="5">Required for centriole duplication. Inhibition of centriole duplication leading to defects in cytokinesis.</text>
</comment>
<comment type="subunit">
    <text evidence="3">Interacts with LYST.</text>
</comment>
<comment type="interaction">
    <interactant intactId="EBI-947360">
        <id>Q8N137</id>
    </interactant>
    <interactant intactId="EBI-355504">
        <id>P27708</id>
        <label>CAD</label>
    </interactant>
    <organismsDiffer>false</organismsDiffer>
    <experiments>2</experiments>
</comment>
<comment type="interaction">
    <interactant intactId="EBI-947360">
        <id>Q8N137</id>
    </interactant>
    <interactant intactId="EBI-10227704">
        <id>Q13057-2</id>
        <label>COASY</label>
    </interactant>
    <organismsDiffer>false</organismsDiffer>
    <experiments>3</experiments>
</comment>
<comment type="interaction">
    <interactant intactId="EBI-947360">
        <id>Q8N137</id>
    </interactant>
    <interactant intactId="EBI-5453285">
        <id>Q2TBE0</id>
        <label>CWF19L2</label>
    </interactant>
    <organismsDiffer>false</organismsDiffer>
    <experiments>3</experiments>
</comment>
<comment type="interaction">
    <interactant intactId="EBI-947360">
        <id>Q8N137</id>
    </interactant>
    <interactant intactId="EBI-1054321">
        <id>Q68J44</id>
        <label>DUSP29</label>
    </interactant>
    <organismsDiffer>false</organismsDiffer>
    <experiments>3</experiments>
</comment>
<comment type="interaction">
    <interactant intactId="EBI-947360">
        <id>Q8N137</id>
    </interactant>
    <interactant intactId="EBI-742350">
        <id>Q14241</id>
        <label>ELOA</label>
    </interactant>
    <organismsDiffer>false</organismsDiffer>
    <experiments>3</experiments>
</comment>
<comment type="interaction">
    <interactant intactId="EBI-947360">
        <id>Q8N137</id>
    </interactant>
    <interactant intactId="EBI-6255981">
        <id>Q7L775</id>
        <label>EPM2AIP1</label>
    </interactant>
    <organismsDiffer>false</organismsDiffer>
    <experiments>3</experiments>
</comment>
<comment type="interaction">
    <interactant intactId="EBI-947360">
        <id>Q8N137</id>
    </interactant>
    <interactant intactId="EBI-348259">
        <id>Q96EZ8</id>
        <label>MCRS1</label>
    </interactant>
    <organismsDiffer>false</organismsDiffer>
    <experiments>3</experiments>
</comment>
<comment type="interaction">
    <interactant intactId="EBI-947360">
        <id>Q8N137</id>
    </interactant>
    <interactant intactId="EBI-448369">
        <id>Q96FA3</id>
        <label>PELI1</label>
    </interactant>
    <organismsDiffer>false</organismsDiffer>
    <experiments>3</experiments>
</comment>
<comment type="interaction">
    <interactant intactId="EBI-947360">
        <id>Q8N137</id>
    </interactant>
    <interactant intactId="EBI-1045072">
        <id>Q96T60</id>
        <label>PNKP</label>
    </interactant>
    <organismsDiffer>false</organismsDiffer>
    <experiments>3</experiments>
</comment>
<comment type="interaction">
    <interactant intactId="EBI-947360">
        <id>Q8N137</id>
    </interactant>
    <interactant intactId="EBI-746453">
        <id>P54725</id>
        <label>RAD23A</label>
    </interactant>
    <organismsDiffer>false</organismsDiffer>
    <experiments>3</experiments>
</comment>
<comment type="interaction">
    <interactant intactId="EBI-947360">
        <id>Q8N137</id>
    </interactant>
    <interactant intactId="EBI-748350">
        <id>Q9UHP6</id>
        <label>RSPH14</label>
    </interactant>
    <organismsDiffer>false</organismsDiffer>
    <experiments>3</experiments>
</comment>
<comment type="interaction">
    <interactant intactId="EBI-947360">
        <id>Q8N137</id>
    </interactant>
    <interactant intactId="EBI-10246152">
        <id>Q5T7P8-2</id>
        <label>SYT6</label>
    </interactant>
    <organismsDiffer>false</organismsDiffer>
    <experiments>3</experiments>
</comment>
<comment type="interaction">
    <interactant intactId="EBI-947360">
        <id>Q8N137</id>
    </interactant>
    <interactant intactId="EBI-710310">
        <id>Q15560</id>
        <label>TCEA2</label>
    </interactant>
    <organismsDiffer>false</organismsDiffer>
    <experiments>3</experiments>
</comment>
<comment type="interaction">
    <interactant intactId="EBI-947360">
        <id>Q8N137</id>
    </interactant>
    <interactant intactId="EBI-10687282">
        <id>Q9NRE2</id>
        <label>TSHZ2</label>
    </interactant>
    <organismsDiffer>false</organismsDiffer>
    <experiments>3</experiments>
</comment>
<comment type="interaction">
    <interactant intactId="EBI-947360">
        <id>Q8N137</id>
    </interactant>
    <interactant intactId="EBI-6447954">
        <id>Q5W5X9</id>
        <label>TTC23</label>
    </interactant>
    <organismsDiffer>false</organismsDiffer>
    <experiments>3</experiments>
</comment>
<comment type="subcellular location">
    <subcellularLocation>
        <location evidence="5">Cytoplasm</location>
        <location evidence="5">Cytoskeleton</location>
        <location evidence="5">Microtubule organizing center</location>
        <location evidence="5">Centrosome</location>
        <location evidence="5">Centriole</location>
    </subcellularLocation>
    <text>Centriole-associated, asymmetrically localizes to the daughter centriole.</text>
</comment>
<comment type="alternative products">
    <event type="alternative splicing"/>
    <isoform>
        <id>Q8N137-1</id>
        <name>1</name>
        <name>Alpha</name>
        <sequence type="displayed"/>
    </isoform>
    <isoform>
        <id>Q8N137-2</id>
        <name>2</name>
        <name>Beta</name>
        <sequence type="described" ref="VSP_016838"/>
    </isoform>
    <isoform>
        <id>Q8N137-3</id>
        <name>3</name>
        <sequence type="described" ref="VSP_016839"/>
    </isoform>
    <isoform>
        <id>Q8N137-4</id>
        <name>4</name>
        <sequence type="described" ref="VSP_016836 VSP_016837"/>
    </isoform>
    <isoform>
        <id>Q8N137-5</id>
        <name>5</name>
        <sequence type="described" ref="VSP_016840 VSP_016841"/>
    </isoform>
</comment>
<comment type="tissue specificity">
    <text evidence="5">Widely expressed (at protein level). Highly expressed in testis. Also expressed in spleen, thymus, prostate, small intestine, colon and peripheral blood leukocytes.</text>
</comment>
<comment type="developmental stage">
    <text evidence="5">Preferentially incorporated into the newly assembled daughter centriole during centriole assembly at the late G1 or early S phase. Remains in the daughter centrioles throughout the cell cycle. At the next cycle of centriole duplication, its amount on the original daughter centriole eventually decreases.</text>
</comment>
<comment type="sequence caution" evidence="10">
    <conflict type="erroneous translation">
        <sequence resource="EMBL-CDS" id="AAG49447"/>
    </conflict>
    <text>Wrong choice of frame.</text>
</comment>
<comment type="sequence caution" evidence="10">
    <conflict type="frameshift">
        <sequence resource="EMBL-CDS" id="AAG49447"/>
    </conflict>
</comment>
<comment type="sequence caution" evidence="10">
    <conflict type="erroneous initiation">
        <sequence resource="EMBL-CDS" id="BAC11241"/>
    </conflict>
</comment>
<proteinExistence type="evidence at protein level"/>
<keyword id="KW-0025">Alternative splicing</keyword>
<keyword id="KW-0131">Cell cycle</keyword>
<keyword id="KW-0132">Cell division</keyword>
<keyword id="KW-0175">Coiled coil</keyword>
<keyword id="KW-0963">Cytoplasm</keyword>
<keyword id="KW-0206">Cytoskeleton</keyword>
<keyword id="KW-0597">Phosphoprotein</keyword>
<keyword id="KW-1267">Proteomics identification</keyword>
<keyword id="KW-1185">Reference proteome</keyword>
<organism>
    <name type="scientific">Homo sapiens</name>
    <name type="common">Human</name>
    <dbReference type="NCBI Taxonomy" id="9606"/>
    <lineage>
        <taxon>Eukaryota</taxon>
        <taxon>Metazoa</taxon>
        <taxon>Chordata</taxon>
        <taxon>Craniata</taxon>
        <taxon>Vertebrata</taxon>
        <taxon>Euteleostomi</taxon>
        <taxon>Mammalia</taxon>
        <taxon>Eutheria</taxon>
        <taxon>Euarchontoglires</taxon>
        <taxon>Primates</taxon>
        <taxon>Haplorrhini</taxon>
        <taxon>Catarrhini</taxon>
        <taxon>Hominidae</taxon>
        <taxon>Homo</taxon>
    </lineage>
</organism>
<gene>
    <name type="primary">CNTROB</name>
    <name type="synonym">LIP8</name>
    <name type="ORF">PP1221</name>
</gene>
<accession>Q8N137</accession>
<accession>A6NHQ1</accession>
<accession>Q331K3</accession>
<accession>Q69YV7</accession>
<accession>Q8NCB8</accession>
<accession>Q8WXV3</accession>
<accession>Q96CQ7</accession>
<accession>Q9C060</accession>
<sequence>MATSADSPSSPLGAEDLLSDSSEPPGLNQVSSEVTSQLYASLRLSRQAEATARAQLYLPSTSPPHEGLDGFAQELSRSLSVGLEKNLKKKDGSKHIFEMESVRGQLQTMLQTSRDTAYRDPLIPGAGSERREEDSFDSDSTATLLNTRPLQDLSPSSSAQALEELFPRYTSLRPGPPLNPPDFQGLRDALDSEHTRRKHCERHIQSLQTRVLELQQQLAVAVAADRKKDTMIEQLDKTLARVVEGWNRHEAERTEVLRGLQEEHQAAELTRSKQQETVTRLEQSLSEAMEALNREQESARLQQRERETLEEERQALTLRLEAEQQRCCVLQEERDAARAGQLSEHRELETLRAALEEERQTWAQQEHQLKEHYQALQEESQAQLEREKEKSQREAQAAWETQHQLALVQSEVRRLEGELDTARRERDALQLEMSLVQARYESQRIQLESELAVQLEQRVTERLAQAQESSLRQAASLREHHRKQLQDLSGQHQQELASQLAQFKVEMAEREERQQQVAEDYELRLAREQARVCELQSGNQQLEEQRVELVERLQAMLQAHWDEANQLLSTTLPPPNPPAPPAGPSSPGPQEPEKEERRVWTMPPMAVALKPVLQQSREARDELPGAPPVLCSSSSDLSLLLGPSFQSQHSFQPLEPKPDLTSSTAGAFSALGAFHPDHRAERPFPEEDPGPDGEGLLKQGLPPAQLEGLKNFLHQLLETVPQNNENPSVDLLPPKSGPLTVPSWEEAPQVPRIPPPVHKTKVPLAMASSLFRVPEPPSSHSQGSGPSSGSPERGGDGLTFPRQLMEVSQLLRLYQARGWGALPAEDLLLYLKRLEHSGTDGRGDNVPRRNTDSRLGEIPRKEIPSQAVPRRLATAPKTEKPPARKKSGHPAPSSMRSRGGVWR</sequence>
<dbReference type="EMBL" id="AY160226">
    <property type="protein sequence ID" value="AAO22135.1"/>
    <property type="molecule type" value="mRNA"/>
</dbReference>
<dbReference type="EMBL" id="AY160227">
    <property type="protein sequence ID" value="AAO22136.1"/>
    <property type="molecule type" value="mRNA"/>
</dbReference>
<dbReference type="EMBL" id="AF331638">
    <property type="protein sequence ID" value="AAL56068.2"/>
    <property type="molecule type" value="mRNA"/>
</dbReference>
<dbReference type="EMBL" id="AL137669">
    <property type="protein sequence ID" value="CAH10698.1"/>
    <property type="molecule type" value="mRNA"/>
</dbReference>
<dbReference type="EMBL" id="AL833907">
    <property type="protein sequence ID" value="CAD38763.1"/>
    <property type="molecule type" value="mRNA"/>
</dbReference>
<dbReference type="EMBL" id="AC104581">
    <property type="status" value="NOT_ANNOTATED_CDS"/>
    <property type="molecule type" value="Genomic_DNA"/>
</dbReference>
<dbReference type="EMBL" id="BC014055">
    <property type="protein sequence ID" value="AAH14055.3"/>
    <property type="molecule type" value="mRNA"/>
</dbReference>
<dbReference type="EMBL" id="BC021134">
    <property type="protein sequence ID" value="AAH21134.1"/>
    <property type="molecule type" value="mRNA"/>
</dbReference>
<dbReference type="EMBL" id="AK074847">
    <property type="protein sequence ID" value="BAC11241.1"/>
    <property type="status" value="ALT_INIT"/>
    <property type="molecule type" value="mRNA"/>
</dbReference>
<dbReference type="EMBL" id="AF141344">
    <property type="protein sequence ID" value="AAG49447.1"/>
    <property type="status" value="ALT_SEQ"/>
    <property type="molecule type" value="mRNA"/>
</dbReference>
<dbReference type="CCDS" id="CCDS11126.1">
    <molecule id="Q8N137-1"/>
</dbReference>
<dbReference type="CCDS" id="CCDS32557.1">
    <molecule id="Q8N137-2"/>
</dbReference>
<dbReference type="CCDS" id="CCDS82063.1">
    <molecule id="Q8N137-3"/>
</dbReference>
<dbReference type="RefSeq" id="NP_001032221.1">
    <molecule id="Q8N137-2"/>
    <property type="nucleotide sequence ID" value="NM_001037144.7"/>
</dbReference>
<dbReference type="RefSeq" id="NP_001317053.1">
    <molecule id="Q8N137-3"/>
    <property type="nucleotide sequence ID" value="NM_001330124.3"/>
</dbReference>
<dbReference type="RefSeq" id="NP_001340132.1">
    <molecule id="Q8N137-1"/>
    <property type="nucleotide sequence ID" value="NM_001353203.2"/>
</dbReference>
<dbReference type="RefSeq" id="NP_001340135.1">
    <molecule id="Q8N137-3"/>
    <property type="nucleotide sequence ID" value="NM_001353206.2"/>
</dbReference>
<dbReference type="RefSeq" id="NP_001340136.1">
    <molecule id="Q8N137-1"/>
    <property type="nucleotide sequence ID" value="NM_001353207.1"/>
</dbReference>
<dbReference type="RefSeq" id="NP_001340137.1">
    <molecule id="Q8N137-3"/>
    <property type="nucleotide sequence ID" value="NM_001353208.2"/>
</dbReference>
<dbReference type="RefSeq" id="NP_001340138.1">
    <molecule id="Q8N137-3"/>
    <property type="nucleotide sequence ID" value="NM_001353209.1"/>
</dbReference>
<dbReference type="RefSeq" id="NP_444279.2">
    <molecule id="Q8N137-1"/>
    <property type="nucleotide sequence ID" value="NM_053051.5"/>
</dbReference>
<dbReference type="RefSeq" id="XP_016879617.1">
    <molecule id="Q8N137-2"/>
    <property type="nucleotide sequence ID" value="XM_017024128.2"/>
</dbReference>
<dbReference type="RefSeq" id="XP_016879618.1">
    <molecule id="Q8N137-2"/>
    <property type="nucleotide sequence ID" value="XM_017024129.2"/>
</dbReference>
<dbReference type="RefSeq" id="XP_016879619.1">
    <property type="nucleotide sequence ID" value="XM_017024130.1"/>
</dbReference>
<dbReference type="RefSeq" id="XP_016879620.1">
    <property type="nucleotide sequence ID" value="XM_017024131.1"/>
</dbReference>
<dbReference type="RefSeq" id="XP_016879621.1">
    <property type="nucleotide sequence ID" value="XM_017024132.1"/>
</dbReference>
<dbReference type="RefSeq" id="XP_016879622.1">
    <property type="nucleotide sequence ID" value="XM_017024133.1"/>
</dbReference>
<dbReference type="SMR" id="Q8N137"/>
<dbReference type="BioGRID" id="125533">
    <property type="interactions" value="169"/>
</dbReference>
<dbReference type="FunCoup" id="Q8N137">
    <property type="interactions" value="778"/>
</dbReference>
<dbReference type="IntAct" id="Q8N137">
    <property type="interactions" value="152"/>
</dbReference>
<dbReference type="MINT" id="Q8N137"/>
<dbReference type="STRING" id="9606.ENSP00000369614"/>
<dbReference type="GlyGen" id="Q8N137">
    <property type="glycosylation" value="2 sites, 1 O-linked glycan (2 sites)"/>
</dbReference>
<dbReference type="iPTMnet" id="Q8N137"/>
<dbReference type="PhosphoSitePlus" id="Q8N137"/>
<dbReference type="BioMuta" id="CNTROB"/>
<dbReference type="DMDM" id="74728485"/>
<dbReference type="jPOST" id="Q8N137"/>
<dbReference type="MassIVE" id="Q8N137"/>
<dbReference type="PaxDb" id="9606-ENSP00000369614"/>
<dbReference type="PeptideAtlas" id="Q8N137"/>
<dbReference type="ProteomicsDB" id="71538">
    <molecule id="Q8N137-1"/>
</dbReference>
<dbReference type="ProteomicsDB" id="71539">
    <molecule id="Q8N137-2"/>
</dbReference>
<dbReference type="ProteomicsDB" id="71540">
    <molecule id="Q8N137-3"/>
</dbReference>
<dbReference type="ProteomicsDB" id="71541">
    <molecule id="Q8N137-4"/>
</dbReference>
<dbReference type="ProteomicsDB" id="71542">
    <molecule id="Q8N137-5"/>
</dbReference>
<dbReference type="Pumba" id="Q8N137"/>
<dbReference type="Antibodypedia" id="12323">
    <property type="antibodies" value="205 antibodies from 28 providers"/>
</dbReference>
<dbReference type="DNASU" id="116840"/>
<dbReference type="Ensembl" id="ENST00000380262.7">
    <molecule id="Q8N137-2"/>
    <property type="protein sequence ID" value="ENSP00000369614.3"/>
    <property type="gene ID" value="ENSG00000170037.14"/>
</dbReference>
<dbReference type="Ensembl" id="ENST00000563694.6">
    <molecule id="Q8N137-1"/>
    <property type="protein sequence ID" value="ENSP00000456335.1"/>
    <property type="gene ID" value="ENSG00000170037.14"/>
</dbReference>
<dbReference type="Ensembl" id="ENST00000565740.5">
    <molecule id="Q8N137-3"/>
    <property type="protein sequence ID" value="ENSP00000454840.1"/>
    <property type="gene ID" value="ENSG00000170037.14"/>
</dbReference>
<dbReference type="GeneID" id="116840"/>
<dbReference type="KEGG" id="hsa:116840"/>
<dbReference type="MANE-Select" id="ENST00000563694.6">
    <property type="protein sequence ID" value="ENSP00000456335.1"/>
    <property type="RefSeq nucleotide sequence ID" value="NM_053051.5"/>
    <property type="RefSeq protein sequence ID" value="NP_444279.2"/>
</dbReference>
<dbReference type="UCSC" id="uc060axe.1">
    <molecule id="Q8N137-1"/>
    <property type="organism name" value="human"/>
</dbReference>
<dbReference type="AGR" id="HGNC:29616"/>
<dbReference type="CTD" id="116840"/>
<dbReference type="DisGeNET" id="116840"/>
<dbReference type="GeneCards" id="CNTROB"/>
<dbReference type="HGNC" id="HGNC:29616">
    <property type="gene designation" value="CNTROB"/>
</dbReference>
<dbReference type="HPA" id="ENSG00000170037">
    <property type="expression patterns" value="Low tissue specificity"/>
</dbReference>
<dbReference type="MIM" id="611425">
    <property type="type" value="gene"/>
</dbReference>
<dbReference type="neXtProt" id="NX_Q8N137"/>
<dbReference type="OpenTargets" id="ENSG00000170037"/>
<dbReference type="PharmGKB" id="PA143485436"/>
<dbReference type="VEuPathDB" id="HostDB:ENSG00000170037"/>
<dbReference type="eggNOG" id="ENOG502QRRG">
    <property type="taxonomic scope" value="Eukaryota"/>
</dbReference>
<dbReference type="GeneTree" id="ENSGT00610000086191"/>
<dbReference type="HOGENOM" id="CLU_344733_0_0_1"/>
<dbReference type="InParanoid" id="Q8N137"/>
<dbReference type="OMA" id="HSGYQPG"/>
<dbReference type="OrthoDB" id="8190486at2759"/>
<dbReference type="PAN-GO" id="Q8N137">
    <property type="GO annotations" value="5 GO annotations based on evolutionary models"/>
</dbReference>
<dbReference type="PhylomeDB" id="Q8N137"/>
<dbReference type="TreeFam" id="TF337444"/>
<dbReference type="PathwayCommons" id="Q8N137"/>
<dbReference type="SignaLink" id="Q8N137"/>
<dbReference type="BioGRID-ORCS" id="116840">
    <property type="hits" value="28 hits in 1158 CRISPR screens"/>
</dbReference>
<dbReference type="CD-CODE" id="8C2F96ED">
    <property type="entry name" value="Centrosome"/>
</dbReference>
<dbReference type="ChiTaRS" id="CNTROB">
    <property type="organism name" value="human"/>
</dbReference>
<dbReference type="GeneWiki" id="CNTROB"/>
<dbReference type="GenomeRNAi" id="116840"/>
<dbReference type="Pharos" id="Q8N137">
    <property type="development level" value="Tbio"/>
</dbReference>
<dbReference type="PRO" id="PR:Q8N137"/>
<dbReference type="Proteomes" id="UP000005640">
    <property type="component" value="Chromosome 17"/>
</dbReference>
<dbReference type="RNAct" id="Q8N137">
    <property type="molecule type" value="protein"/>
</dbReference>
<dbReference type="Bgee" id="ENSG00000170037">
    <property type="expression patterns" value="Expressed in left testis and 166 other cell types or tissues"/>
</dbReference>
<dbReference type="ExpressionAtlas" id="Q8N137">
    <property type="expression patterns" value="baseline and differential"/>
</dbReference>
<dbReference type="GO" id="GO:0005814">
    <property type="term" value="C:centriole"/>
    <property type="evidence" value="ECO:0000314"/>
    <property type="project" value="UniProtKB"/>
</dbReference>
<dbReference type="GO" id="GO:0005813">
    <property type="term" value="C:centrosome"/>
    <property type="evidence" value="ECO:0000314"/>
    <property type="project" value="HPA"/>
</dbReference>
<dbReference type="GO" id="GO:0036064">
    <property type="term" value="C:ciliary basal body"/>
    <property type="evidence" value="ECO:0000314"/>
    <property type="project" value="HPA"/>
</dbReference>
<dbReference type="GO" id="GO:0005829">
    <property type="term" value="C:cytosol"/>
    <property type="evidence" value="ECO:0000314"/>
    <property type="project" value="HPA"/>
</dbReference>
<dbReference type="GO" id="GO:0019904">
    <property type="term" value="F:protein domain specific binding"/>
    <property type="evidence" value="ECO:0000353"/>
    <property type="project" value="UniProtKB"/>
</dbReference>
<dbReference type="GO" id="GO:0007099">
    <property type="term" value="P:centriole replication"/>
    <property type="evidence" value="ECO:0000315"/>
    <property type="project" value="HGNC-UCL"/>
</dbReference>
<dbReference type="GO" id="GO:0051299">
    <property type="term" value="P:centrosome separation"/>
    <property type="evidence" value="ECO:0000315"/>
    <property type="project" value="HGNC-UCL"/>
</dbReference>
<dbReference type="GO" id="GO:1902410">
    <property type="term" value="P:mitotic cytokinetic process"/>
    <property type="evidence" value="ECO:0000315"/>
    <property type="project" value="BHF-UCL"/>
</dbReference>
<dbReference type="GO" id="GO:1902017">
    <property type="term" value="P:regulation of cilium assembly"/>
    <property type="evidence" value="ECO:0007669"/>
    <property type="project" value="InterPro"/>
</dbReference>
<dbReference type="InterPro" id="IPR038923">
    <property type="entry name" value="Centrobin"/>
</dbReference>
<dbReference type="PANTHER" id="PTHR34439">
    <property type="entry name" value="CENTROBIN"/>
    <property type="match status" value="1"/>
</dbReference>
<dbReference type="PANTHER" id="PTHR34439:SF1">
    <property type="entry name" value="CENTROBIN"/>
    <property type="match status" value="1"/>
</dbReference>